<sequence length="179" mass="19881">MAGNREDRKAKVIEVLNKARAMELHAIHQYMNQHYSLDDMDYGELAANMKLIAIDEMRHAENFAERIKELGGEPTTQKEGKVVTGQAVPVIYESDADQEDATIEAYSQFLKVCKEQGDIVTARLFERIIEEEQAHLTYYENIGSHIKNLGDTYLAKIAGTPSSTGTASKGFVTATPAAE</sequence>
<protein>
    <recommendedName>
        <fullName>Bacterioferritin</fullName>
        <shortName>BFR</shortName>
        <ecNumber>1.16.3.1</ecNumber>
    </recommendedName>
</protein>
<evidence type="ECO:0000250" key="1">
    <source>
        <dbReference type="UniProtKB" id="Q9HWF9"/>
    </source>
</evidence>
<evidence type="ECO:0000255" key="2">
    <source>
        <dbReference type="PROSITE-ProRule" id="PRU00085"/>
    </source>
</evidence>
<evidence type="ECO:0000269" key="3">
    <source>
    </source>
</evidence>
<evidence type="ECO:0000269" key="4">
    <source>
    </source>
</evidence>
<evidence type="ECO:0000305" key="5"/>
<evidence type="ECO:0007829" key="6">
    <source>
        <dbReference type="PDB" id="1NFV"/>
    </source>
</evidence>
<organism>
    <name type="scientific">Desulfovibrio desulfuricans (strain ATCC 27774 / DSM 6949 / MB)</name>
    <dbReference type="NCBI Taxonomy" id="525146"/>
    <lineage>
        <taxon>Bacteria</taxon>
        <taxon>Pseudomonadati</taxon>
        <taxon>Thermodesulfobacteriota</taxon>
        <taxon>Desulfovibrionia</taxon>
        <taxon>Desulfovibrionales</taxon>
        <taxon>Desulfovibrionaceae</taxon>
        <taxon>Desulfovibrio</taxon>
    </lineage>
</organism>
<proteinExistence type="evidence at protein level"/>
<reference evidence="5" key="1">
    <citation type="journal article" date="2001" name="Mol. Microbiol.">
        <title>The genetic organization of Desulfovibrio desulphuricans ATCC 27774 bacterioferritin and rubredoxin-2 genes: involvement of rubredoxin in iron metabolism.</title>
        <authorList>
            <person name="da Costa P.N."/>
            <person name="Romao C.V."/>
            <person name="LeGall J."/>
            <person name="Xavier A.V."/>
            <person name="Melo E."/>
            <person name="Teixeira M."/>
            <person name="Saraiva L.M."/>
        </authorList>
    </citation>
    <scope>NUCLEOTIDE SEQUENCE [GENOMIC DNA]</scope>
    <source>
        <strain>ATCC 27774 / DSM 6949 / MB</strain>
    </source>
</reference>
<reference key="2">
    <citation type="submission" date="2009-01" db="EMBL/GenBank/DDBJ databases">
        <title>Complete sequence of Desulfovibrio desulfuricans subsp. desulfuricans str. ATCC 27774.</title>
        <authorList>
            <consortium name="US DOE Joint Genome Institute"/>
            <person name="Lucas S."/>
            <person name="Copeland A."/>
            <person name="Lapidus A."/>
            <person name="Glavina del Rio T."/>
            <person name="Tice H."/>
            <person name="Bruce D."/>
            <person name="Goodwin L."/>
            <person name="Pitluck S."/>
            <person name="Sims D."/>
            <person name="Lu M."/>
            <person name="Kiss H."/>
            <person name="Meineke L."/>
            <person name="Brettin T."/>
            <person name="Detter J.C."/>
            <person name="Han C."/>
            <person name="Larimer F."/>
            <person name="Land M."/>
            <person name="Hauser L."/>
            <person name="Kyrpides N."/>
            <person name="Ovchinnikova G."/>
            <person name="Hazen T.C."/>
        </authorList>
    </citation>
    <scope>NUCLEOTIDE SEQUENCE [LARGE SCALE GENOMIC DNA]</scope>
    <source>
        <strain>ATCC 27774 / DSM 6949 / MB</strain>
    </source>
</reference>
<reference evidence="5" key="3">
    <citation type="journal article" date="2000" name="Biochemistry">
        <title>A bacterioferritin from the strict anaerobe Desulfovibrio desulfuricans ATCC 27774.</title>
        <authorList>
            <person name="Romao C.V."/>
            <person name="Regalla M."/>
            <person name="Xavier A.V."/>
            <person name="Teixeira M."/>
            <person name="Liu M.-Y."/>
            <person name="Le Gall J."/>
        </authorList>
    </citation>
    <scope>PARTIAL PROTEIN SEQUENCE</scope>
    <scope>SUBUNIT</scope>
    <scope>REDOX POTENTIOMETRY OF HEME</scope>
    <scope>ABSORPTION SPECTROSCOPY</scope>
    <scope>EPR SPECTROSCOPY</scope>
    <source>
        <strain>ATCC 27774 / DSM 6949 / MB</strain>
    </source>
</reference>
<reference evidence="5" key="4">
    <citation type="journal article" date="2000" name="FEBS Lett.">
        <title>Iron-coproporphyrin III is a natural cofactor in bacterioferritin from the anaerobic bacterium Desulfovibrio desulfuricans.</title>
        <authorList>
            <person name="Romao C.V."/>
            <person name="Louro R."/>
            <person name="Timkovich R."/>
            <person name="Lubben M."/>
            <person name="Liu M.Y."/>
            <person name="LeGall J."/>
            <person name="Xavier A.V."/>
            <person name="Teixeira M."/>
        </authorList>
    </citation>
    <scope>COFACTOR</scope>
</reference>
<reference evidence="5" key="5">
    <citation type="journal article" date="2001" name="Acta Crystallogr. D">
        <title>Structure determination of bacterioferritin from Desulfovibrio desulfuricans by the MAD method at the Fe K-edge.</title>
        <authorList>
            <person name="Coelho A.V."/>
            <person name="Macedo S."/>
            <person name="Matias P.M."/>
            <person name="Thompson A.W."/>
            <person name="LeGall J."/>
            <person name="Carrondo M.A."/>
        </authorList>
    </citation>
    <scope>CRYSTALLIZATION</scope>
</reference>
<reference evidence="5" key="6">
    <citation type="journal article" date="2003" name="Nat. Struct. Biol.">
        <title>The nature of the di-iron site in the bacterioferritin from Desulfovibrio desulfuricans.</title>
        <authorList>
            <person name="Macedo S."/>
            <person name="Romao C.V."/>
            <person name="Mitchell E."/>
            <person name="Matias P.M."/>
            <person name="Liu M.Y."/>
            <person name="Xavier A.V."/>
            <person name="LeGall J."/>
            <person name="Teixeira M."/>
            <person name="Lindley P."/>
            <person name="Carrondo M.A."/>
        </authorList>
    </citation>
    <scope>X-RAY CRYSTALLOGRAPHY (1.95 ANGSTROMS)</scope>
</reference>
<gene>
    <name type="primary">bfr</name>
    <name type="ordered locus">Ddes_1387</name>
</gene>
<dbReference type="EC" id="1.16.3.1"/>
<dbReference type="EMBL" id="AF321851">
    <property type="protein sequence ID" value="AAK60120.1"/>
    <property type="molecule type" value="Genomic_DNA"/>
</dbReference>
<dbReference type="EMBL" id="CP001358">
    <property type="protein sequence ID" value="ACL49289.1"/>
    <property type="molecule type" value="Genomic_DNA"/>
</dbReference>
<dbReference type="PDB" id="1NF4">
    <property type="method" value="X-ray"/>
    <property type="resolution" value="2.05 A"/>
    <property type="chains" value="A/B/C/D/E/F/G/H/I/J/K/L/M/N/O/P=1-179"/>
</dbReference>
<dbReference type="PDB" id="1NF6">
    <property type="method" value="X-ray"/>
    <property type="resolution" value="2.35 A"/>
    <property type="chains" value="A/B/C/D/E/F/G/H/I/J/K/L/M/N/O/P=1-179"/>
</dbReference>
<dbReference type="PDB" id="1NFV">
    <property type="method" value="X-ray"/>
    <property type="resolution" value="1.95 A"/>
    <property type="chains" value="A/B/C/D/E/F/G/H/I/J/K/L/M/N/O/P=1-179"/>
</dbReference>
<dbReference type="PDBsum" id="1NF4"/>
<dbReference type="PDBsum" id="1NF6"/>
<dbReference type="PDBsum" id="1NFV"/>
<dbReference type="SMR" id="Q93PP9"/>
<dbReference type="STRING" id="525146.Ddes_1387"/>
<dbReference type="KEGG" id="dds:Ddes_1387"/>
<dbReference type="eggNOG" id="COG2193">
    <property type="taxonomic scope" value="Bacteria"/>
</dbReference>
<dbReference type="HOGENOM" id="CLU_104506_1_0_7"/>
<dbReference type="BRENDA" id="1.16.3.1">
    <property type="organism ID" value="1905"/>
</dbReference>
<dbReference type="EvolutionaryTrace" id="Q93PP9"/>
<dbReference type="GO" id="GO:0005829">
    <property type="term" value="C:cytosol"/>
    <property type="evidence" value="ECO:0007669"/>
    <property type="project" value="TreeGrafter"/>
</dbReference>
<dbReference type="GO" id="GO:0008199">
    <property type="term" value="F:ferric iron binding"/>
    <property type="evidence" value="ECO:0007669"/>
    <property type="project" value="InterPro"/>
</dbReference>
<dbReference type="GO" id="GO:0004322">
    <property type="term" value="F:ferroxidase activity"/>
    <property type="evidence" value="ECO:0007669"/>
    <property type="project" value="UniProtKB-EC"/>
</dbReference>
<dbReference type="GO" id="GO:0020037">
    <property type="term" value="F:heme binding"/>
    <property type="evidence" value="ECO:0007669"/>
    <property type="project" value="TreeGrafter"/>
</dbReference>
<dbReference type="GO" id="GO:0140315">
    <property type="term" value="F:iron ion sequestering activity"/>
    <property type="evidence" value="ECO:0000303"/>
    <property type="project" value="UniProtKB"/>
</dbReference>
<dbReference type="GO" id="GO:0006879">
    <property type="term" value="P:intracellular iron ion homeostasis"/>
    <property type="evidence" value="ECO:0007669"/>
    <property type="project" value="UniProtKB-KW"/>
</dbReference>
<dbReference type="GO" id="GO:0006826">
    <property type="term" value="P:iron ion transport"/>
    <property type="evidence" value="ECO:0007669"/>
    <property type="project" value="InterPro"/>
</dbReference>
<dbReference type="CDD" id="cd00907">
    <property type="entry name" value="Bacterioferritin"/>
    <property type="match status" value="1"/>
</dbReference>
<dbReference type="Gene3D" id="1.20.1260.10">
    <property type="match status" value="1"/>
</dbReference>
<dbReference type="InterPro" id="IPR002024">
    <property type="entry name" value="Bacterioferritin"/>
</dbReference>
<dbReference type="InterPro" id="IPR012347">
    <property type="entry name" value="Ferritin-like"/>
</dbReference>
<dbReference type="InterPro" id="IPR009040">
    <property type="entry name" value="Ferritin-like_diiron"/>
</dbReference>
<dbReference type="InterPro" id="IPR009078">
    <property type="entry name" value="Ferritin-like_SF"/>
</dbReference>
<dbReference type="InterPro" id="IPR008331">
    <property type="entry name" value="Ferritin_DPS_dom"/>
</dbReference>
<dbReference type="PANTHER" id="PTHR30295">
    <property type="entry name" value="BACTERIOFERRITIN"/>
    <property type="match status" value="1"/>
</dbReference>
<dbReference type="PANTHER" id="PTHR30295:SF0">
    <property type="entry name" value="BACTERIOFERRITIN"/>
    <property type="match status" value="1"/>
</dbReference>
<dbReference type="Pfam" id="PF00210">
    <property type="entry name" value="Ferritin"/>
    <property type="match status" value="1"/>
</dbReference>
<dbReference type="PIRSF" id="PIRSF002560">
    <property type="entry name" value="Bacterioferritin"/>
    <property type="match status" value="1"/>
</dbReference>
<dbReference type="PRINTS" id="PR00601">
    <property type="entry name" value="BACFERRITIN"/>
</dbReference>
<dbReference type="SUPFAM" id="SSF47240">
    <property type="entry name" value="Ferritin-like"/>
    <property type="match status" value="1"/>
</dbReference>
<dbReference type="PROSITE" id="PS50905">
    <property type="entry name" value="FERRITIN_LIKE"/>
    <property type="match status" value="1"/>
</dbReference>
<feature type="chain" id="PRO_0000192591" description="Bacterioferritin">
    <location>
        <begin position="1"/>
        <end position="179"/>
    </location>
</feature>
<feature type="domain" description="Ferritin-like diiron" evidence="2">
    <location>
        <begin position="1"/>
        <end position="150"/>
    </location>
</feature>
<feature type="binding site">
    <location>
        <position position="23"/>
    </location>
    <ligand>
        <name>Fe cation</name>
        <dbReference type="ChEBI" id="CHEBI:24875"/>
        <label>1</label>
    </ligand>
</feature>
<feature type="binding site">
    <location>
        <position position="56"/>
    </location>
    <ligand>
        <name>Fe cation</name>
        <dbReference type="ChEBI" id="CHEBI:24875"/>
        <label>1</label>
    </ligand>
</feature>
<feature type="binding site">
    <location>
        <position position="56"/>
    </location>
    <ligand>
        <name>Fe cation</name>
        <dbReference type="ChEBI" id="CHEBI:24875"/>
        <label>2</label>
    </ligand>
</feature>
<feature type="binding site" description="axial binding residue">
    <location>
        <position position="57"/>
    </location>
    <ligand>
        <name>Fe-coproporphyrin III</name>
        <dbReference type="ChEBI" id="CHEBI:68438"/>
        <note>ligand shared between dimeric partners</note>
    </ligand>
    <ligandPart>
        <name>Fe</name>
        <dbReference type="ChEBI" id="CHEBI:18248"/>
    </ligandPart>
</feature>
<feature type="binding site">
    <location>
        <position position="59"/>
    </location>
    <ligand>
        <name>Fe cation</name>
        <dbReference type="ChEBI" id="CHEBI:24875"/>
        <label>1</label>
    </ligand>
</feature>
<feature type="binding site">
    <location>
        <position position="99"/>
    </location>
    <ligand>
        <name>Fe cation</name>
        <dbReference type="ChEBI" id="CHEBI:24875"/>
        <label>2</label>
    </ligand>
</feature>
<feature type="binding site">
    <location>
        <position position="132"/>
    </location>
    <ligand>
        <name>Fe cation</name>
        <dbReference type="ChEBI" id="CHEBI:24875"/>
        <label>1</label>
    </ligand>
</feature>
<feature type="binding site">
    <location>
        <position position="132"/>
    </location>
    <ligand>
        <name>Fe cation</name>
        <dbReference type="ChEBI" id="CHEBI:24875"/>
        <label>2</label>
    </ligand>
</feature>
<feature type="binding site">
    <location>
        <position position="135"/>
    </location>
    <ligand>
        <name>Fe cation</name>
        <dbReference type="ChEBI" id="CHEBI:24875"/>
        <label>2</label>
    </ligand>
</feature>
<feature type="helix" evidence="6">
    <location>
        <begin position="5"/>
        <end position="39"/>
    </location>
</feature>
<feature type="helix" evidence="6">
    <location>
        <begin position="43"/>
        <end position="69"/>
    </location>
</feature>
<feature type="helix" evidence="6">
    <location>
        <begin position="88"/>
        <end position="115"/>
    </location>
</feature>
<feature type="helix" evidence="6">
    <location>
        <begin position="119"/>
        <end position="149"/>
    </location>
</feature>
<feature type="helix" evidence="6">
    <location>
        <begin position="151"/>
        <end position="157"/>
    </location>
</feature>
<keyword id="KW-0002">3D-structure</keyword>
<keyword id="KW-0903">Direct protein sequencing</keyword>
<keyword id="KW-0349">Heme</keyword>
<keyword id="KW-0408">Iron</keyword>
<keyword id="KW-0409">Iron storage</keyword>
<keyword id="KW-0479">Metal-binding</keyword>
<keyword id="KW-0560">Oxidoreductase</keyword>
<comment type="function">
    <text>Iron-storage protein, whose ferroxidase center binds Fe(2+), oxidizes it using dioxygen to Fe(3+), and participates in the subsequent Fe(3+) oxide mineral core formation within the central cavity of the BFR protein shell.</text>
</comment>
<comment type="catalytic activity">
    <reaction>
        <text>4 Fe(2+) + O2 + 4 H(+) = 4 Fe(3+) + 2 H2O</text>
        <dbReference type="Rhea" id="RHEA:11148"/>
        <dbReference type="ChEBI" id="CHEBI:15377"/>
        <dbReference type="ChEBI" id="CHEBI:15378"/>
        <dbReference type="ChEBI" id="CHEBI:15379"/>
        <dbReference type="ChEBI" id="CHEBI:29033"/>
        <dbReference type="ChEBI" id="CHEBI:29034"/>
        <dbReference type="EC" id="1.16.3.1"/>
    </reaction>
</comment>
<comment type="catalytic activity">
    <reaction evidence="1">
        <text>Fe(2+)(in) = Fe(2+)(out)</text>
        <dbReference type="Rhea" id="RHEA:28486"/>
        <dbReference type="ChEBI" id="CHEBI:29033"/>
    </reaction>
</comment>
<comment type="cofactor">
    <cofactor evidence="4">
        <name>Fe-coproporphyrin III</name>
        <dbReference type="ChEBI" id="CHEBI:68438"/>
    </cofactor>
    <text evidence="4">Binds 1 Fe-coproporphyrin III group per dimer.</text>
</comment>
<comment type="cofactor">
    <cofactor evidence="4">
        <name>Fe cation</name>
        <dbReference type="ChEBI" id="CHEBI:24875"/>
    </cofactor>
    <text evidence="4">Binds 2 iron ions per subunit.</text>
</comment>
<comment type="subunit">
    <text evidence="3">Homooligomer of 24 subunits, arranged as 12 dimers, that are packed together to form an approximately spherical molecule with a central cavity, in which large amounts of iron can be deposited.</text>
</comment>
<comment type="miscellaneous">
    <text evidence="5">The catalytic dinuclear iron-binding site within each subunit is known as the ferroxidase center.</text>
</comment>
<comment type="similarity">
    <text evidence="5">Belongs to the bacterioferritin family.</text>
</comment>
<name>BFR_DESDA</name>
<accession>Q93PP9</accession>
<accession>B8J0L2</accession>